<reference key="1">
    <citation type="journal article" date="2003" name="Science">
        <title>Genome of Geobacter sulfurreducens: metal reduction in subsurface environments.</title>
        <authorList>
            <person name="Methe B.A."/>
            <person name="Nelson K.E."/>
            <person name="Eisen J.A."/>
            <person name="Paulsen I.T."/>
            <person name="Nelson W.C."/>
            <person name="Heidelberg J.F."/>
            <person name="Wu D."/>
            <person name="Wu M."/>
            <person name="Ward N.L."/>
            <person name="Beanan M.J."/>
            <person name="Dodson R.J."/>
            <person name="Madupu R."/>
            <person name="Brinkac L.M."/>
            <person name="Daugherty S.C."/>
            <person name="DeBoy R.T."/>
            <person name="Durkin A.S."/>
            <person name="Gwinn M.L."/>
            <person name="Kolonay J.F."/>
            <person name="Sullivan S.A."/>
            <person name="Haft D.H."/>
            <person name="Selengut J."/>
            <person name="Davidsen T.M."/>
            <person name="Zafar N."/>
            <person name="White O."/>
            <person name="Tran B."/>
            <person name="Romero C."/>
            <person name="Forberger H.A."/>
            <person name="Weidman J.F."/>
            <person name="Khouri H.M."/>
            <person name="Feldblyum T.V."/>
            <person name="Utterback T.R."/>
            <person name="Van Aken S.E."/>
            <person name="Lovley D.R."/>
            <person name="Fraser C.M."/>
        </authorList>
    </citation>
    <scope>NUCLEOTIDE SEQUENCE [LARGE SCALE GENOMIC DNA]</scope>
    <source>
        <strain>ATCC 51573 / DSM 12127 / PCA</strain>
    </source>
</reference>
<proteinExistence type="inferred from homology"/>
<protein>
    <recommendedName>
        <fullName evidence="1">D-aminoacyl-tRNA deacylase</fullName>
        <shortName evidence="1">DTD</shortName>
        <ecNumber evidence="1">3.1.1.96</ecNumber>
    </recommendedName>
    <alternativeName>
        <fullName evidence="1">Gly-tRNA(Ala) deacylase</fullName>
    </alternativeName>
</protein>
<comment type="function">
    <text evidence="1">An aminoacyl-tRNA editing enzyme that deacylates mischarged D-aminoacyl-tRNAs. Also deacylates mischarged glycyl-tRNA(Ala), protecting cells against glycine mischarging by AlaRS. Acts via tRNA-based rather than protein-based catalysis; rejects L-amino acids rather than detecting D-amino acids in the active site. By recycling D-aminoacyl-tRNA to D-amino acids and free tRNA molecules, this enzyme counteracts the toxicity associated with the formation of D-aminoacyl-tRNA entities in vivo and helps enforce protein L-homochirality.</text>
</comment>
<comment type="catalytic activity">
    <reaction evidence="1">
        <text>glycyl-tRNA(Ala) + H2O = tRNA(Ala) + glycine + H(+)</text>
        <dbReference type="Rhea" id="RHEA:53744"/>
        <dbReference type="Rhea" id="RHEA-COMP:9657"/>
        <dbReference type="Rhea" id="RHEA-COMP:13640"/>
        <dbReference type="ChEBI" id="CHEBI:15377"/>
        <dbReference type="ChEBI" id="CHEBI:15378"/>
        <dbReference type="ChEBI" id="CHEBI:57305"/>
        <dbReference type="ChEBI" id="CHEBI:78442"/>
        <dbReference type="ChEBI" id="CHEBI:78522"/>
        <dbReference type="EC" id="3.1.1.96"/>
    </reaction>
</comment>
<comment type="catalytic activity">
    <reaction evidence="1">
        <text>a D-aminoacyl-tRNA + H2O = a tRNA + a D-alpha-amino acid + H(+)</text>
        <dbReference type="Rhea" id="RHEA:13953"/>
        <dbReference type="Rhea" id="RHEA-COMP:10123"/>
        <dbReference type="Rhea" id="RHEA-COMP:10124"/>
        <dbReference type="ChEBI" id="CHEBI:15377"/>
        <dbReference type="ChEBI" id="CHEBI:15378"/>
        <dbReference type="ChEBI" id="CHEBI:59871"/>
        <dbReference type="ChEBI" id="CHEBI:78442"/>
        <dbReference type="ChEBI" id="CHEBI:79333"/>
        <dbReference type="EC" id="3.1.1.96"/>
    </reaction>
</comment>
<comment type="subunit">
    <text evidence="1">Homodimer.</text>
</comment>
<comment type="subcellular location">
    <subcellularLocation>
        <location evidence="1">Cytoplasm</location>
    </subcellularLocation>
</comment>
<comment type="domain">
    <text evidence="1">A Gly-cisPro motif from one monomer fits into the active site of the other monomer to allow specific chiral rejection of L-amino acids.</text>
</comment>
<comment type="similarity">
    <text evidence="1">Belongs to the DTD family.</text>
</comment>
<gene>
    <name evidence="1" type="primary">dtd</name>
    <name type="ordered locus">GSU0525</name>
</gene>
<sequence>MKAVIQRVSEARVEVDGSTVGAIGRGILVLLGVEKGDTERDAAWLAEKMAGLRIFEDDAGKMNLSVREVEGSILAVSQFTLAGNCAKGRRPSFDTAAPPDEGKRLYDRFVDLIRETGIPTATGIFQADMKVHLVNDGPVTFILDTKSRSSST</sequence>
<accession>Q74FT1</accession>
<organism>
    <name type="scientific">Geobacter sulfurreducens (strain ATCC 51573 / DSM 12127 / PCA)</name>
    <dbReference type="NCBI Taxonomy" id="243231"/>
    <lineage>
        <taxon>Bacteria</taxon>
        <taxon>Pseudomonadati</taxon>
        <taxon>Thermodesulfobacteriota</taxon>
        <taxon>Desulfuromonadia</taxon>
        <taxon>Geobacterales</taxon>
        <taxon>Geobacteraceae</taxon>
        <taxon>Geobacter</taxon>
    </lineage>
</organism>
<name>DTD_GEOSL</name>
<dbReference type="EC" id="3.1.1.96" evidence="1"/>
<dbReference type="EMBL" id="AE017180">
    <property type="protein sequence ID" value="AAR33856.1"/>
    <property type="molecule type" value="Genomic_DNA"/>
</dbReference>
<dbReference type="RefSeq" id="NP_951583.1">
    <property type="nucleotide sequence ID" value="NC_002939.5"/>
</dbReference>
<dbReference type="RefSeq" id="WP_010941193.1">
    <property type="nucleotide sequence ID" value="NC_002939.5"/>
</dbReference>
<dbReference type="SMR" id="Q74FT1"/>
<dbReference type="FunCoup" id="Q74FT1">
    <property type="interactions" value="448"/>
</dbReference>
<dbReference type="STRING" id="243231.GSU0525"/>
<dbReference type="EnsemblBacteria" id="AAR33856">
    <property type="protein sequence ID" value="AAR33856"/>
    <property type="gene ID" value="GSU0525"/>
</dbReference>
<dbReference type="KEGG" id="gsu:GSU0525"/>
<dbReference type="PATRIC" id="fig|243231.5.peg.526"/>
<dbReference type="eggNOG" id="COG1490">
    <property type="taxonomic scope" value="Bacteria"/>
</dbReference>
<dbReference type="HOGENOM" id="CLU_076901_1_0_7"/>
<dbReference type="InParanoid" id="Q74FT1"/>
<dbReference type="OrthoDB" id="9801395at2"/>
<dbReference type="Proteomes" id="UP000000577">
    <property type="component" value="Chromosome"/>
</dbReference>
<dbReference type="GO" id="GO:0005737">
    <property type="term" value="C:cytoplasm"/>
    <property type="evidence" value="ECO:0000318"/>
    <property type="project" value="GO_Central"/>
</dbReference>
<dbReference type="GO" id="GO:0051500">
    <property type="term" value="F:D-tyrosyl-tRNA(Tyr) deacylase activity"/>
    <property type="evidence" value="ECO:0000318"/>
    <property type="project" value="GO_Central"/>
</dbReference>
<dbReference type="GO" id="GO:0106026">
    <property type="term" value="F:Gly-tRNA(Ala) deacylase activity"/>
    <property type="evidence" value="ECO:0007669"/>
    <property type="project" value="UniProtKB-UniRule"/>
</dbReference>
<dbReference type="GO" id="GO:0043908">
    <property type="term" value="F:Ser(Gly)-tRNA(Ala) hydrolase activity"/>
    <property type="evidence" value="ECO:0007669"/>
    <property type="project" value="UniProtKB-UniRule"/>
</dbReference>
<dbReference type="GO" id="GO:0000049">
    <property type="term" value="F:tRNA binding"/>
    <property type="evidence" value="ECO:0007669"/>
    <property type="project" value="UniProtKB-UniRule"/>
</dbReference>
<dbReference type="GO" id="GO:0019478">
    <property type="term" value="P:D-amino acid catabolic process"/>
    <property type="evidence" value="ECO:0007669"/>
    <property type="project" value="UniProtKB-UniRule"/>
</dbReference>
<dbReference type="GO" id="GO:0006399">
    <property type="term" value="P:tRNA metabolic process"/>
    <property type="evidence" value="ECO:0000318"/>
    <property type="project" value="GO_Central"/>
</dbReference>
<dbReference type="CDD" id="cd00563">
    <property type="entry name" value="Dtyr_deacylase"/>
    <property type="match status" value="1"/>
</dbReference>
<dbReference type="FunFam" id="3.50.80.10:FF:000001">
    <property type="entry name" value="D-aminoacyl-tRNA deacylase"/>
    <property type="match status" value="1"/>
</dbReference>
<dbReference type="Gene3D" id="3.50.80.10">
    <property type="entry name" value="D-tyrosyl-tRNA(Tyr) deacylase"/>
    <property type="match status" value="1"/>
</dbReference>
<dbReference type="HAMAP" id="MF_00518">
    <property type="entry name" value="Deacylase_Dtd"/>
    <property type="match status" value="1"/>
</dbReference>
<dbReference type="InterPro" id="IPR003732">
    <property type="entry name" value="Daa-tRNA_deacyls_DTD"/>
</dbReference>
<dbReference type="InterPro" id="IPR023509">
    <property type="entry name" value="DTD-like_sf"/>
</dbReference>
<dbReference type="NCBIfam" id="TIGR00256">
    <property type="entry name" value="D-aminoacyl-tRNA deacylase"/>
    <property type="match status" value="1"/>
</dbReference>
<dbReference type="PANTHER" id="PTHR10472:SF5">
    <property type="entry name" value="D-AMINOACYL-TRNA DEACYLASE 1"/>
    <property type="match status" value="1"/>
</dbReference>
<dbReference type="PANTHER" id="PTHR10472">
    <property type="entry name" value="D-TYROSYL-TRNA TYR DEACYLASE"/>
    <property type="match status" value="1"/>
</dbReference>
<dbReference type="Pfam" id="PF02580">
    <property type="entry name" value="Tyr_Deacylase"/>
    <property type="match status" value="1"/>
</dbReference>
<dbReference type="SUPFAM" id="SSF69500">
    <property type="entry name" value="DTD-like"/>
    <property type="match status" value="1"/>
</dbReference>
<feature type="chain" id="PRO_0000164544" description="D-aminoacyl-tRNA deacylase">
    <location>
        <begin position="1"/>
        <end position="152"/>
    </location>
</feature>
<feature type="short sequence motif" description="Gly-cisPro motif, important for rejection of L-amino acids" evidence="1">
    <location>
        <begin position="137"/>
        <end position="138"/>
    </location>
</feature>
<evidence type="ECO:0000255" key="1">
    <source>
        <dbReference type="HAMAP-Rule" id="MF_00518"/>
    </source>
</evidence>
<keyword id="KW-0963">Cytoplasm</keyword>
<keyword id="KW-0378">Hydrolase</keyword>
<keyword id="KW-1185">Reference proteome</keyword>
<keyword id="KW-0694">RNA-binding</keyword>
<keyword id="KW-0820">tRNA-binding</keyword>